<protein>
    <recommendedName>
        <fullName evidence="1">Elongation factor P</fullName>
        <shortName evidence="1">EF-P</shortName>
    </recommendedName>
</protein>
<sequence length="188" mass="21411">MAERANDIRPGQVLEHNGGLFLVVGIMHTQPGKGGAYIQAEMKNIKTGAKHYERFRSDATIRRAILDEEEYVYLFTEGNIVNLMHPSNYEQITINLDLLGEKKIYLQDNMKIKVVAYQDKIISAHVPDYVTLAVKETESVIKGQTATASYKPAILENGMRVNVPQFIKEEDKIVVYTPDDSYYERVKE</sequence>
<comment type="function">
    <text evidence="1">Involved in peptide bond synthesis. Stimulates efficient translation and peptide-bond synthesis on native or reconstituted 70S ribosomes in vitro. Probably functions indirectly by altering the affinity of the ribosome for aminoacyl-tRNA, thus increasing their reactivity as acceptors for peptidyl transferase.</text>
</comment>
<comment type="pathway">
    <text evidence="1">Protein biosynthesis; polypeptide chain elongation.</text>
</comment>
<comment type="subcellular location">
    <subcellularLocation>
        <location evidence="1">Cytoplasm</location>
    </subcellularLocation>
</comment>
<comment type="similarity">
    <text evidence="1">Belongs to the elongation factor P family.</text>
</comment>
<keyword id="KW-0963">Cytoplasm</keyword>
<keyword id="KW-0251">Elongation factor</keyword>
<keyword id="KW-0648">Protein biosynthesis</keyword>
<reference key="1">
    <citation type="journal article" date="2009" name="Proc. Natl. Acad. Sci. U.S.A.">
        <title>The mosaic genome structure of the Wolbachia wRi strain infecting Drosophila simulans.</title>
        <authorList>
            <person name="Klasson L."/>
            <person name="Westberg J."/>
            <person name="Sapountzis P."/>
            <person name="Naeslund K."/>
            <person name="Lutnaes Y."/>
            <person name="Darby A.C."/>
            <person name="Veneti Z."/>
            <person name="Chen L."/>
            <person name="Braig H.R."/>
            <person name="Garrett R."/>
            <person name="Bourtzis K."/>
            <person name="Andersson S.G."/>
        </authorList>
    </citation>
    <scope>NUCLEOTIDE SEQUENCE [LARGE SCALE GENOMIC DNA]</scope>
    <source>
        <strain>wRi</strain>
    </source>
</reference>
<organism>
    <name type="scientific">Wolbachia sp. subsp. Drosophila simulans (strain wRi)</name>
    <dbReference type="NCBI Taxonomy" id="66084"/>
    <lineage>
        <taxon>Bacteria</taxon>
        <taxon>Pseudomonadati</taxon>
        <taxon>Pseudomonadota</taxon>
        <taxon>Alphaproteobacteria</taxon>
        <taxon>Rickettsiales</taxon>
        <taxon>Anaplasmataceae</taxon>
        <taxon>Wolbachieae</taxon>
        <taxon>Wolbachia</taxon>
    </lineage>
</organism>
<dbReference type="EMBL" id="CP001391">
    <property type="protein sequence ID" value="ACN95984.1"/>
    <property type="molecule type" value="Genomic_DNA"/>
</dbReference>
<dbReference type="RefSeq" id="WP_012673415.1">
    <property type="nucleotide sequence ID" value="NZ_MKIF01000109.1"/>
</dbReference>
<dbReference type="SMR" id="C0R4Z2"/>
<dbReference type="STRING" id="66084.WRi_013080"/>
<dbReference type="KEGG" id="wri:WRi_013080"/>
<dbReference type="HOGENOM" id="CLU_074944_1_1_5"/>
<dbReference type="UniPathway" id="UPA00345"/>
<dbReference type="Proteomes" id="UP000001293">
    <property type="component" value="Chromosome"/>
</dbReference>
<dbReference type="GO" id="GO:0005737">
    <property type="term" value="C:cytoplasm"/>
    <property type="evidence" value="ECO:0007669"/>
    <property type="project" value="UniProtKB-SubCell"/>
</dbReference>
<dbReference type="GO" id="GO:0003746">
    <property type="term" value="F:translation elongation factor activity"/>
    <property type="evidence" value="ECO:0007669"/>
    <property type="project" value="UniProtKB-UniRule"/>
</dbReference>
<dbReference type="GO" id="GO:0043043">
    <property type="term" value="P:peptide biosynthetic process"/>
    <property type="evidence" value="ECO:0007669"/>
    <property type="project" value="InterPro"/>
</dbReference>
<dbReference type="CDD" id="cd05794">
    <property type="entry name" value="S1_EF-P_repeat_2"/>
    <property type="match status" value="1"/>
</dbReference>
<dbReference type="FunFam" id="2.40.50.140:FF:000004">
    <property type="entry name" value="Elongation factor P"/>
    <property type="match status" value="1"/>
</dbReference>
<dbReference type="Gene3D" id="2.30.30.30">
    <property type="match status" value="1"/>
</dbReference>
<dbReference type="Gene3D" id="2.40.50.140">
    <property type="entry name" value="Nucleic acid-binding proteins"/>
    <property type="match status" value="2"/>
</dbReference>
<dbReference type="HAMAP" id="MF_00141">
    <property type="entry name" value="EF_P"/>
    <property type="match status" value="1"/>
</dbReference>
<dbReference type="InterPro" id="IPR015365">
    <property type="entry name" value="Elong-fact-P_C"/>
</dbReference>
<dbReference type="InterPro" id="IPR012340">
    <property type="entry name" value="NA-bd_OB-fold"/>
</dbReference>
<dbReference type="InterPro" id="IPR014722">
    <property type="entry name" value="Rib_uL2_dom2"/>
</dbReference>
<dbReference type="InterPro" id="IPR020599">
    <property type="entry name" value="Transl_elong_fac_P/YeiP"/>
</dbReference>
<dbReference type="InterPro" id="IPR013185">
    <property type="entry name" value="Transl_elong_KOW-like"/>
</dbReference>
<dbReference type="InterPro" id="IPR001059">
    <property type="entry name" value="Transl_elong_P/YeiP_cen"/>
</dbReference>
<dbReference type="InterPro" id="IPR011768">
    <property type="entry name" value="Transl_elongation_fac_P"/>
</dbReference>
<dbReference type="InterPro" id="IPR008991">
    <property type="entry name" value="Translation_prot_SH3-like_sf"/>
</dbReference>
<dbReference type="NCBIfam" id="TIGR00038">
    <property type="entry name" value="efp"/>
    <property type="match status" value="1"/>
</dbReference>
<dbReference type="NCBIfam" id="NF001810">
    <property type="entry name" value="PRK00529.1"/>
    <property type="match status" value="1"/>
</dbReference>
<dbReference type="PANTHER" id="PTHR30053">
    <property type="entry name" value="ELONGATION FACTOR P"/>
    <property type="match status" value="1"/>
</dbReference>
<dbReference type="PANTHER" id="PTHR30053:SF14">
    <property type="entry name" value="TRANSLATION ELONGATION FACTOR KOW-LIKE DOMAIN-CONTAINING PROTEIN"/>
    <property type="match status" value="1"/>
</dbReference>
<dbReference type="Pfam" id="PF01132">
    <property type="entry name" value="EFP"/>
    <property type="match status" value="1"/>
</dbReference>
<dbReference type="Pfam" id="PF08207">
    <property type="entry name" value="EFP_N"/>
    <property type="match status" value="1"/>
</dbReference>
<dbReference type="Pfam" id="PF09285">
    <property type="entry name" value="Elong-fact-P_C"/>
    <property type="match status" value="1"/>
</dbReference>
<dbReference type="PIRSF" id="PIRSF005901">
    <property type="entry name" value="EF-P"/>
    <property type="match status" value="1"/>
</dbReference>
<dbReference type="SMART" id="SM01185">
    <property type="entry name" value="EFP"/>
    <property type="match status" value="1"/>
</dbReference>
<dbReference type="SMART" id="SM00841">
    <property type="entry name" value="Elong-fact-P_C"/>
    <property type="match status" value="1"/>
</dbReference>
<dbReference type="SUPFAM" id="SSF50249">
    <property type="entry name" value="Nucleic acid-binding proteins"/>
    <property type="match status" value="2"/>
</dbReference>
<dbReference type="SUPFAM" id="SSF50104">
    <property type="entry name" value="Translation proteins SH3-like domain"/>
    <property type="match status" value="1"/>
</dbReference>
<proteinExistence type="inferred from homology"/>
<name>EFP_WOLWR</name>
<evidence type="ECO:0000255" key="1">
    <source>
        <dbReference type="HAMAP-Rule" id="MF_00141"/>
    </source>
</evidence>
<accession>C0R4Z2</accession>
<feature type="chain" id="PRO_1000123039" description="Elongation factor P">
    <location>
        <begin position="1"/>
        <end position="188"/>
    </location>
</feature>
<gene>
    <name evidence="1" type="primary">efp</name>
    <name type="ordered locus">WRi_013080</name>
</gene>